<gene>
    <name type="primary">ABCA9</name>
</gene>
<proteinExistence type="evidence at protein level"/>
<comment type="function">
    <text evidence="9">Transporter that may play a role in monocyte differentiation and lipid transport and homeostasis.</text>
</comment>
<comment type="subcellular location">
    <subcellularLocation>
        <location evidence="8">Membrane</location>
        <topology evidence="8">Multi-pass membrane protein</topology>
    </subcellularLocation>
</comment>
<comment type="alternative products">
    <event type="alternative splicing"/>
    <isoform>
        <id>Q8IUA7-1</id>
        <name>1</name>
        <sequence type="displayed"/>
    </isoform>
    <isoform>
        <id>Q8IUA7-2</id>
        <name>2</name>
        <name>ABCA9delta+55</name>
        <sequence type="described" ref="VSP_020705"/>
    </isoform>
    <isoform>
        <id>Q8IUA7-3</id>
        <name>3</name>
        <name>ABCA9delta+73</name>
        <sequence type="described" ref="VSP_020707 VSP_020709"/>
    </isoform>
    <isoform>
        <id>Q8IUA7-4</id>
        <name>4</name>
        <name>ABCA9delta-95</name>
        <sequence type="described" ref="VSP_020708 VSP_020709"/>
    </isoform>
    <isoform>
        <id>Q8IUA7-5</id>
        <name>5</name>
        <sequence type="described" ref="VSP_020706"/>
    </isoform>
</comment>
<comment type="tissue specificity">
    <text evidence="6">Widely expressed with higher expression in heart.</text>
</comment>
<comment type="developmental stage">
    <text evidence="3">Expressed in fetal tissues with higher expression in fetal heart and kidney.</text>
</comment>
<comment type="induction">
    <text evidence="3">Up-regulated during monocyte differentiation into macrophages. Down-regulated by cholesterol loading of macrophages.</text>
</comment>
<comment type="similarity">
    <text evidence="8">Belongs to the ABC transporter superfamily. ABCA family.</text>
</comment>
<comment type="sequence caution" evidence="8">
    <conflict type="erroneous initiation">
        <sequence resource="EMBL-CDS" id="AAH62472"/>
    </conflict>
    <text>Truncated N-terminus.</text>
</comment>
<comment type="sequence caution" evidence="8">
    <conflict type="erroneous initiation">
        <sequence resource="EMBL-CDS" id="BAC11021"/>
    </conflict>
    <text>Truncated N-terminus.</text>
</comment>
<comment type="online information" name="ABCMdb">
    <link uri="http://abcm2.hegelab.org/search"/>
    <text>Database for mutations in ABC proteins</text>
</comment>
<feature type="chain" id="PRO_0000250680" description="ATP-binding cassette sub-family A member 9">
    <location>
        <begin position="1"/>
        <end position="1624"/>
    </location>
</feature>
<feature type="transmembrane region" description="Helical" evidence="1">
    <location>
        <begin position="31"/>
        <end position="51"/>
    </location>
</feature>
<feature type="transmembrane region" description="Helical" evidence="1">
    <location>
        <begin position="221"/>
        <end position="243"/>
    </location>
</feature>
<feature type="transmembrane region" description="Helical" evidence="1">
    <location>
        <begin position="269"/>
        <end position="289"/>
    </location>
</feature>
<feature type="transmembrane region" description="Helical" evidence="1">
    <location>
        <begin position="300"/>
        <end position="320"/>
    </location>
</feature>
<feature type="transmembrane region" description="Helical" evidence="1">
    <location>
        <begin position="329"/>
        <end position="349"/>
    </location>
</feature>
<feature type="transmembrane region" description="Helical" evidence="1">
    <location>
        <begin position="354"/>
        <end position="374"/>
    </location>
</feature>
<feature type="transmembrane region" description="Helical" evidence="1">
    <location>
        <begin position="398"/>
        <end position="418"/>
    </location>
</feature>
<feature type="transmembrane region" description="Helical" evidence="1">
    <location>
        <begin position="864"/>
        <end position="884"/>
    </location>
</feature>
<feature type="transmembrane region" description="Helical" evidence="1">
    <location>
        <begin position="1026"/>
        <end position="1046"/>
    </location>
</feature>
<feature type="transmembrane region" description="Helical" evidence="1">
    <location>
        <begin position="1065"/>
        <end position="1085"/>
    </location>
</feature>
<feature type="transmembrane region" description="Helical" evidence="1">
    <location>
        <begin position="1108"/>
        <end position="1128"/>
    </location>
</feature>
<feature type="transmembrane region" description="Helical" evidence="1">
    <location>
        <begin position="1136"/>
        <end position="1156"/>
    </location>
</feature>
<feature type="transmembrane region" description="Helical" evidence="1">
    <location>
        <begin position="1163"/>
        <end position="1183"/>
    </location>
</feature>
<feature type="transmembrane region" description="Helical" evidence="1">
    <location>
        <begin position="1200"/>
        <end position="1220"/>
    </location>
</feature>
<feature type="domain" description="ABC transporter 1" evidence="2">
    <location>
        <begin position="481"/>
        <end position="716"/>
    </location>
</feature>
<feature type="domain" description="ABC transporter 2" evidence="2">
    <location>
        <begin position="1288"/>
        <end position="1521"/>
    </location>
</feature>
<feature type="binding site" evidence="2">
    <location>
        <begin position="517"/>
        <end position="524"/>
    </location>
    <ligand>
        <name>ATP</name>
        <dbReference type="ChEBI" id="CHEBI:30616"/>
        <label>1</label>
    </ligand>
</feature>
<feature type="binding site" evidence="2">
    <location>
        <begin position="1326"/>
        <end position="1333"/>
    </location>
    <ligand>
        <name>ATP</name>
        <dbReference type="ChEBI" id="CHEBI:30616"/>
        <label>2</label>
    </ligand>
</feature>
<feature type="glycosylation site" description="N-linked (GlcNAc...) asparagine" evidence="1">
    <location>
        <position position="120"/>
    </location>
</feature>
<feature type="glycosylation site" description="N-linked (GlcNAc...) asparagine" evidence="1">
    <location>
        <position position="195"/>
    </location>
</feature>
<feature type="glycosylation site" description="N-linked (GlcNAc...) asparagine" evidence="5">
    <location>
        <position position="949"/>
    </location>
</feature>
<feature type="splice variant" id="VSP_020705" description="In isoform 2." evidence="8">
    <location>
        <begin position="267"/>
        <end position="1624"/>
    </location>
</feature>
<feature type="splice variant" id="VSP_020706" description="In isoform 5." evidence="7">
    <location>
        <begin position="268"/>
        <end position="1624"/>
    </location>
</feature>
<feature type="splice variant" id="VSP_020707" description="In isoform 3." evidence="8">
    <original>L</original>
    <variation>VRAGLVVALQVP</variation>
    <location>
        <position position="1429"/>
    </location>
</feature>
<feature type="splice variant" id="VSP_020708" description="In isoform 4." evidence="8">
    <original>L</original>
    <variation>AGDSGHL</variation>
    <location>
        <position position="1429"/>
    </location>
</feature>
<feature type="splice variant" id="VSP_020709" description="In isoform 3 and isoform 4." evidence="8">
    <location>
        <begin position="1430"/>
        <end position="1624"/>
    </location>
</feature>
<feature type="sequence variant" id="VAR_027594" description="In dbSNP:rs1860447." evidence="4 6">
    <original>R</original>
    <variation>H</variation>
    <location>
        <position position="353"/>
    </location>
</feature>
<feature type="sequence variant" id="VAR_027595" description="In dbSNP:rs17684521.">
    <original>N</original>
    <variation>S</variation>
    <location>
        <position position="785"/>
    </location>
</feature>
<feature type="sequence variant" id="VAR_027596" description="In dbSNP:rs2302294." evidence="6">
    <original>K</original>
    <variation>T</variation>
    <location>
        <position position="1306"/>
    </location>
</feature>
<feature type="sequence variant" id="VAR_027597" description="In dbSNP:rs9916254.">
    <original>G</original>
    <variation>S</variation>
    <location>
        <position position="1356"/>
    </location>
</feature>
<feature type="sequence conflict" description="In Ref. 1; AAK30024." evidence="8" ref="1">
    <original>C</original>
    <variation>R</variation>
    <location>
        <position position="1430"/>
    </location>
</feature>
<evidence type="ECO:0000255" key="1"/>
<evidence type="ECO:0000255" key="2">
    <source>
        <dbReference type="PROSITE-ProRule" id="PRU00434"/>
    </source>
</evidence>
<evidence type="ECO:0000269" key="3">
    <source>
    </source>
</evidence>
<evidence type="ECO:0000269" key="4">
    <source>
    </source>
</evidence>
<evidence type="ECO:0000269" key="5">
    <source>
    </source>
</evidence>
<evidence type="ECO:0000269" key="6">
    <source ref="1"/>
</evidence>
<evidence type="ECO:0000303" key="7">
    <source>
    </source>
</evidence>
<evidence type="ECO:0000305" key="8"/>
<evidence type="ECO:0000305" key="9">
    <source>
    </source>
</evidence>
<dbReference type="EC" id="7.6.2.-" evidence="9"/>
<dbReference type="EMBL" id="AY028899">
    <property type="protein sequence ID" value="AAK30024.1"/>
    <property type="molecule type" value="mRNA"/>
</dbReference>
<dbReference type="EMBL" id="AF423307">
    <property type="protein sequence ID" value="AAN32751.1"/>
    <property type="molecule type" value="mRNA"/>
</dbReference>
<dbReference type="EMBL" id="AF423346">
    <property type="protein sequence ID" value="AAN32752.1"/>
    <property type="molecule type" value="Genomic_DNA"/>
</dbReference>
<dbReference type="EMBL" id="AF423308">
    <property type="protein sequence ID" value="AAN32752.1"/>
    <property type="status" value="JOINED"/>
    <property type="molecule type" value="Genomic_DNA"/>
</dbReference>
<dbReference type="EMBL" id="AF423309">
    <property type="protein sequence ID" value="AAN32752.1"/>
    <property type="status" value="JOINED"/>
    <property type="molecule type" value="Genomic_DNA"/>
</dbReference>
<dbReference type="EMBL" id="AF423310">
    <property type="protein sequence ID" value="AAN32752.1"/>
    <property type="status" value="JOINED"/>
    <property type="molecule type" value="Genomic_DNA"/>
</dbReference>
<dbReference type="EMBL" id="AF423311">
    <property type="protein sequence ID" value="AAN32752.1"/>
    <property type="status" value="JOINED"/>
    <property type="molecule type" value="Genomic_DNA"/>
</dbReference>
<dbReference type="EMBL" id="AF423312">
    <property type="protein sequence ID" value="AAN32752.1"/>
    <property type="status" value="JOINED"/>
    <property type="molecule type" value="Genomic_DNA"/>
</dbReference>
<dbReference type="EMBL" id="AF423313">
    <property type="protein sequence ID" value="AAN32752.1"/>
    <property type="status" value="JOINED"/>
    <property type="molecule type" value="Genomic_DNA"/>
</dbReference>
<dbReference type="EMBL" id="AF423314">
    <property type="protein sequence ID" value="AAN32752.1"/>
    <property type="status" value="JOINED"/>
    <property type="molecule type" value="Genomic_DNA"/>
</dbReference>
<dbReference type="EMBL" id="AF423315">
    <property type="protein sequence ID" value="AAN32752.1"/>
    <property type="status" value="JOINED"/>
    <property type="molecule type" value="Genomic_DNA"/>
</dbReference>
<dbReference type="EMBL" id="AF423316">
    <property type="protein sequence ID" value="AAN32752.1"/>
    <property type="status" value="JOINED"/>
    <property type="molecule type" value="Genomic_DNA"/>
</dbReference>
<dbReference type="EMBL" id="AF423317">
    <property type="protein sequence ID" value="AAN32752.1"/>
    <property type="status" value="JOINED"/>
    <property type="molecule type" value="Genomic_DNA"/>
</dbReference>
<dbReference type="EMBL" id="AF423318">
    <property type="protein sequence ID" value="AAN32752.1"/>
    <property type="status" value="JOINED"/>
    <property type="molecule type" value="Genomic_DNA"/>
</dbReference>
<dbReference type="EMBL" id="AF423320">
    <property type="protein sequence ID" value="AAN32752.1"/>
    <property type="status" value="JOINED"/>
    <property type="molecule type" value="Genomic_DNA"/>
</dbReference>
<dbReference type="EMBL" id="AF423321">
    <property type="protein sequence ID" value="AAN32752.1"/>
    <property type="status" value="JOINED"/>
    <property type="molecule type" value="Genomic_DNA"/>
</dbReference>
<dbReference type="EMBL" id="AF423322">
    <property type="protein sequence ID" value="AAN32752.1"/>
    <property type="status" value="JOINED"/>
    <property type="molecule type" value="Genomic_DNA"/>
</dbReference>
<dbReference type="EMBL" id="AF423323">
    <property type="protein sequence ID" value="AAN32752.1"/>
    <property type="status" value="JOINED"/>
    <property type="molecule type" value="Genomic_DNA"/>
</dbReference>
<dbReference type="EMBL" id="AF423324">
    <property type="protein sequence ID" value="AAN32752.1"/>
    <property type="status" value="JOINED"/>
    <property type="molecule type" value="Genomic_DNA"/>
</dbReference>
<dbReference type="EMBL" id="AF423325">
    <property type="protein sequence ID" value="AAN32752.1"/>
    <property type="status" value="JOINED"/>
    <property type="molecule type" value="Genomic_DNA"/>
</dbReference>
<dbReference type="EMBL" id="AF423326">
    <property type="protein sequence ID" value="AAN32752.1"/>
    <property type="status" value="JOINED"/>
    <property type="molecule type" value="Genomic_DNA"/>
</dbReference>
<dbReference type="EMBL" id="AF423327">
    <property type="protein sequence ID" value="AAN32752.1"/>
    <property type="status" value="JOINED"/>
    <property type="molecule type" value="Genomic_DNA"/>
</dbReference>
<dbReference type="EMBL" id="AF423328">
    <property type="protein sequence ID" value="AAN32752.1"/>
    <property type="status" value="JOINED"/>
    <property type="molecule type" value="Genomic_DNA"/>
</dbReference>
<dbReference type="EMBL" id="AF423329">
    <property type="protein sequence ID" value="AAN32752.1"/>
    <property type="status" value="JOINED"/>
    <property type="molecule type" value="Genomic_DNA"/>
</dbReference>
<dbReference type="EMBL" id="AF423330">
    <property type="protein sequence ID" value="AAN32752.1"/>
    <property type="status" value="JOINED"/>
    <property type="molecule type" value="Genomic_DNA"/>
</dbReference>
<dbReference type="EMBL" id="AF423331">
    <property type="protein sequence ID" value="AAN32752.1"/>
    <property type="status" value="JOINED"/>
    <property type="molecule type" value="Genomic_DNA"/>
</dbReference>
<dbReference type="EMBL" id="AF423332">
    <property type="protein sequence ID" value="AAN32752.1"/>
    <property type="status" value="JOINED"/>
    <property type="molecule type" value="Genomic_DNA"/>
</dbReference>
<dbReference type="EMBL" id="AF423333">
    <property type="protein sequence ID" value="AAN32752.1"/>
    <property type="status" value="JOINED"/>
    <property type="molecule type" value="Genomic_DNA"/>
</dbReference>
<dbReference type="EMBL" id="AF423334">
    <property type="protein sequence ID" value="AAN32752.1"/>
    <property type="status" value="JOINED"/>
    <property type="molecule type" value="Genomic_DNA"/>
</dbReference>
<dbReference type="EMBL" id="AF423335">
    <property type="protein sequence ID" value="AAN32752.1"/>
    <property type="status" value="JOINED"/>
    <property type="molecule type" value="Genomic_DNA"/>
</dbReference>
<dbReference type="EMBL" id="AF423336">
    <property type="protein sequence ID" value="AAN32752.1"/>
    <property type="status" value="JOINED"/>
    <property type="molecule type" value="Genomic_DNA"/>
</dbReference>
<dbReference type="EMBL" id="AF423337">
    <property type="protein sequence ID" value="AAN32752.1"/>
    <property type="status" value="JOINED"/>
    <property type="molecule type" value="Genomic_DNA"/>
</dbReference>
<dbReference type="EMBL" id="AF423338">
    <property type="protein sequence ID" value="AAN32752.1"/>
    <property type="status" value="JOINED"/>
    <property type="molecule type" value="Genomic_DNA"/>
</dbReference>
<dbReference type="EMBL" id="AF423339">
    <property type="protein sequence ID" value="AAN32752.1"/>
    <property type="status" value="JOINED"/>
    <property type="molecule type" value="Genomic_DNA"/>
</dbReference>
<dbReference type="EMBL" id="AF423340">
    <property type="protein sequence ID" value="AAN32752.1"/>
    <property type="status" value="JOINED"/>
    <property type="molecule type" value="Genomic_DNA"/>
</dbReference>
<dbReference type="EMBL" id="AF423341">
    <property type="protein sequence ID" value="AAN32752.1"/>
    <property type="status" value="JOINED"/>
    <property type="molecule type" value="Genomic_DNA"/>
</dbReference>
<dbReference type="EMBL" id="AF423342">
    <property type="protein sequence ID" value="AAN32752.1"/>
    <property type="status" value="JOINED"/>
    <property type="molecule type" value="Genomic_DNA"/>
</dbReference>
<dbReference type="EMBL" id="AF423343">
    <property type="protein sequence ID" value="AAN32752.1"/>
    <property type="status" value="JOINED"/>
    <property type="molecule type" value="Genomic_DNA"/>
</dbReference>
<dbReference type="EMBL" id="AF423344">
    <property type="protein sequence ID" value="AAN32752.1"/>
    <property type="status" value="JOINED"/>
    <property type="molecule type" value="Genomic_DNA"/>
</dbReference>
<dbReference type="EMBL" id="AF423345">
    <property type="protein sequence ID" value="AAN32752.1"/>
    <property type="status" value="JOINED"/>
    <property type="molecule type" value="Genomic_DNA"/>
</dbReference>
<dbReference type="EMBL" id="BC062472">
    <property type="protein sequence ID" value="AAH62472.1"/>
    <property type="status" value="ALT_INIT"/>
    <property type="molecule type" value="mRNA"/>
</dbReference>
<dbReference type="EMBL" id="AK057068">
    <property type="protein sequence ID" value="BAB71359.1"/>
    <property type="molecule type" value="mRNA"/>
</dbReference>
<dbReference type="EMBL" id="AK074491">
    <property type="protein sequence ID" value="BAC11021.1"/>
    <property type="status" value="ALT_INIT"/>
    <property type="molecule type" value="mRNA"/>
</dbReference>
<dbReference type="CCDS" id="CCDS11681.1">
    <molecule id="Q8IUA7-1"/>
</dbReference>
<dbReference type="RefSeq" id="NP_525022.2">
    <molecule id="Q8IUA7-1"/>
    <property type="nucleotide sequence ID" value="NM_080283.3"/>
</dbReference>
<dbReference type="SMR" id="Q8IUA7"/>
<dbReference type="BioGRID" id="115631">
    <property type="interactions" value="8"/>
</dbReference>
<dbReference type="FunCoup" id="Q8IUA7">
    <property type="interactions" value="127"/>
</dbReference>
<dbReference type="IntAct" id="Q8IUA7">
    <property type="interactions" value="9"/>
</dbReference>
<dbReference type="STRING" id="9606.ENSP00000342216"/>
<dbReference type="TCDB" id="3.A.1.211.16">
    <property type="family name" value="the atp-binding cassette (abc) superfamily"/>
</dbReference>
<dbReference type="GlyCosmos" id="Q8IUA7">
    <property type="glycosylation" value="3 sites, No reported glycans"/>
</dbReference>
<dbReference type="GlyGen" id="Q8IUA7">
    <property type="glycosylation" value="3 sites"/>
</dbReference>
<dbReference type="iPTMnet" id="Q8IUA7"/>
<dbReference type="PhosphoSitePlus" id="Q8IUA7"/>
<dbReference type="SwissPalm" id="Q8IUA7"/>
<dbReference type="BioMuta" id="ABCA9"/>
<dbReference type="DMDM" id="74762471"/>
<dbReference type="MassIVE" id="Q8IUA7"/>
<dbReference type="PaxDb" id="9606-ENSP00000342216"/>
<dbReference type="PeptideAtlas" id="Q8IUA7"/>
<dbReference type="ProteomicsDB" id="70529">
    <molecule id="Q8IUA7-1"/>
</dbReference>
<dbReference type="ProteomicsDB" id="70531">
    <molecule id="Q8IUA7-3"/>
</dbReference>
<dbReference type="ProteomicsDB" id="70532">
    <molecule id="Q8IUA7-4"/>
</dbReference>
<dbReference type="Antibodypedia" id="31822">
    <property type="antibodies" value="170 antibodies from 30 providers"/>
</dbReference>
<dbReference type="DNASU" id="10350"/>
<dbReference type="Ensembl" id="ENST00000340001.9">
    <molecule id="Q8IUA7-1"/>
    <property type="protein sequence ID" value="ENSP00000342216.3"/>
    <property type="gene ID" value="ENSG00000154258.17"/>
</dbReference>
<dbReference type="Ensembl" id="ENST00000495634.5">
    <molecule id="Q8IUA7-5"/>
    <property type="protein sequence ID" value="ENSP00000465601.1"/>
    <property type="gene ID" value="ENSG00000154258.17"/>
</dbReference>
<dbReference type="GeneID" id="10350"/>
<dbReference type="KEGG" id="hsa:10350"/>
<dbReference type="MANE-Select" id="ENST00000340001.9">
    <property type="protein sequence ID" value="ENSP00000342216.3"/>
    <property type="RefSeq nucleotide sequence ID" value="NM_080283.4"/>
    <property type="RefSeq protein sequence ID" value="NP_525022.2"/>
</dbReference>
<dbReference type="UCSC" id="uc002jhu.4">
    <molecule id="Q8IUA7-1"/>
    <property type="organism name" value="human"/>
</dbReference>
<dbReference type="AGR" id="HGNC:39"/>
<dbReference type="CTD" id="10350"/>
<dbReference type="DisGeNET" id="10350"/>
<dbReference type="GeneCards" id="ABCA9"/>
<dbReference type="HGNC" id="HGNC:39">
    <property type="gene designation" value="ABCA9"/>
</dbReference>
<dbReference type="HPA" id="ENSG00000154258">
    <property type="expression patterns" value="Low tissue specificity"/>
</dbReference>
<dbReference type="MIM" id="612507">
    <property type="type" value="gene"/>
</dbReference>
<dbReference type="neXtProt" id="NX_Q8IUA7"/>
<dbReference type="OpenTargets" id="ENSG00000154258"/>
<dbReference type="PharmGKB" id="PA24384"/>
<dbReference type="VEuPathDB" id="HostDB:ENSG00000154258"/>
<dbReference type="eggNOG" id="KOG0059">
    <property type="taxonomic scope" value="Eukaryota"/>
</dbReference>
<dbReference type="GeneTree" id="ENSGT00940000162444"/>
<dbReference type="HOGENOM" id="CLU_054320_0_0_1"/>
<dbReference type="InParanoid" id="Q8IUA7"/>
<dbReference type="OMA" id="TYFEEHT"/>
<dbReference type="OrthoDB" id="8061355at2759"/>
<dbReference type="PAN-GO" id="Q8IUA7">
    <property type="GO annotations" value="4 GO annotations based on evolutionary models"/>
</dbReference>
<dbReference type="PhylomeDB" id="Q8IUA7"/>
<dbReference type="TreeFam" id="TF105192"/>
<dbReference type="PathwayCommons" id="Q8IUA7"/>
<dbReference type="Reactome" id="R-HSA-1369062">
    <property type="pathway name" value="ABC transporters in lipid homeostasis"/>
</dbReference>
<dbReference type="SignaLink" id="Q8IUA7"/>
<dbReference type="BioGRID-ORCS" id="10350">
    <property type="hits" value="6 hits in 1150 CRISPR screens"/>
</dbReference>
<dbReference type="ChiTaRS" id="ABCA9">
    <property type="organism name" value="human"/>
</dbReference>
<dbReference type="GeneWiki" id="ABCA9"/>
<dbReference type="GenomeRNAi" id="10350"/>
<dbReference type="Pharos" id="Q8IUA7">
    <property type="development level" value="Tbio"/>
</dbReference>
<dbReference type="PRO" id="PR:Q8IUA7"/>
<dbReference type="Proteomes" id="UP000005640">
    <property type="component" value="Chromosome 17"/>
</dbReference>
<dbReference type="RNAct" id="Q8IUA7">
    <property type="molecule type" value="protein"/>
</dbReference>
<dbReference type="Bgee" id="ENSG00000154258">
    <property type="expression patterns" value="Expressed in mucosa of stomach and 160 other cell types or tissues"/>
</dbReference>
<dbReference type="ExpressionAtlas" id="Q8IUA7">
    <property type="expression patterns" value="baseline and differential"/>
</dbReference>
<dbReference type="GO" id="GO:0043231">
    <property type="term" value="C:intracellular membrane-bounded organelle"/>
    <property type="evidence" value="ECO:0000318"/>
    <property type="project" value="GO_Central"/>
</dbReference>
<dbReference type="GO" id="GO:0016020">
    <property type="term" value="C:membrane"/>
    <property type="evidence" value="ECO:0007669"/>
    <property type="project" value="UniProtKB-SubCell"/>
</dbReference>
<dbReference type="GO" id="GO:0140359">
    <property type="term" value="F:ABC-type transporter activity"/>
    <property type="evidence" value="ECO:0007669"/>
    <property type="project" value="InterPro"/>
</dbReference>
<dbReference type="GO" id="GO:0005524">
    <property type="term" value="F:ATP binding"/>
    <property type="evidence" value="ECO:0007669"/>
    <property type="project" value="UniProtKB-KW"/>
</dbReference>
<dbReference type="GO" id="GO:0016887">
    <property type="term" value="F:ATP hydrolysis activity"/>
    <property type="evidence" value="ECO:0007669"/>
    <property type="project" value="InterPro"/>
</dbReference>
<dbReference type="GO" id="GO:0042626">
    <property type="term" value="F:ATPase-coupled transmembrane transporter activity"/>
    <property type="evidence" value="ECO:0000318"/>
    <property type="project" value="GO_Central"/>
</dbReference>
<dbReference type="GO" id="GO:0005319">
    <property type="term" value="F:lipid transporter activity"/>
    <property type="evidence" value="ECO:0000318"/>
    <property type="project" value="GO_Central"/>
</dbReference>
<dbReference type="GO" id="GO:0006869">
    <property type="term" value="P:lipid transport"/>
    <property type="evidence" value="ECO:0000318"/>
    <property type="project" value="GO_Central"/>
</dbReference>
<dbReference type="CDD" id="cd03263">
    <property type="entry name" value="ABC_subfamily_A"/>
    <property type="match status" value="2"/>
</dbReference>
<dbReference type="FunFam" id="3.40.50.300:FF:000335">
    <property type="entry name" value="ATP binding cassette subfamily A member 5"/>
    <property type="match status" value="1"/>
</dbReference>
<dbReference type="FunFam" id="3.40.50.300:FF:000436">
    <property type="entry name" value="ATP binding cassette subfamily A member 9"/>
    <property type="match status" value="1"/>
</dbReference>
<dbReference type="Gene3D" id="3.40.50.300">
    <property type="entry name" value="P-loop containing nucleotide triphosphate hydrolases"/>
    <property type="match status" value="2"/>
</dbReference>
<dbReference type="InterPro" id="IPR003593">
    <property type="entry name" value="AAA+_ATPase"/>
</dbReference>
<dbReference type="InterPro" id="IPR013525">
    <property type="entry name" value="ABC2_TM"/>
</dbReference>
<dbReference type="InterPro" id="IPR003439">
    <property type="entry name" value="ABC_transporter-like_ATP-bd"/>
</dbReference>
<dbReference type="InterPro" id="IPR026082">
    <property type="entry name" value="ABCA"/>
</dbReference>
<dbReference type="InterPro" id="IPR027417">
    <property type="entry name" value="P-loop_NTPase"/>
</dbReference>
<dbReference type="PANTHER" id="PTHR19229:SF120">
    <property type="entry name" value="ATP-BINDING CASSETTE SUB-FAMILY A MEMBER 9"/>
    <property type="match status" value="1"/>
</dbReference>
<dbReference type="PANTHER" id="PTHR19229">
    <property type="entry name" value="ATP-BINDING CASSETTE TRANSPORTER SUBFAMILY A ABCA"/>
    <property type="match status" value="1"/>
</dbReference>
<dbReference type="Pfam" id="PF12698">
    <property type="entry name" value="ABC2_membrane_3"/>
    <property type="match status" value="2"/>
</dbReference>
<dbReference type="Pfam" id="PF00005">
    <property type="entry name" value="ABC_tran"/>
    <property type="match status" value="2"/>
</dbReference>
<dbReference type="SMART" id="SM00382">
    <property type="entry name" value="AAA"/>
    <property type="match status" value="2"/>
</dbReference>
<dbReference type="SUPFAM" id="SSF52540">
    <property type="entry name" value="P-loop containing nucleoside triphosphate hydrolases"/>
    <property type="match status" value="2"/>
</dbReference>
<dbReference type="PROSITE" id="PS50893">
    <property type="entry name" value="ABC_TRANSPORTER_2"/>
    <property type="match status" value="2"/>
</dbReference>
<sequence>MSKRRMSVGQQTWALLCKNCLKKWRMKRQTLLEWLFSFLLVLFLYLFFSNLHQVHDTPQMSSMDLGRVDSFNDTNYVIAFAPESKTTQEIMNKVASAPFLKGRTIMGWPDEKSMDELDLNYSIDAVRVIFTDTFSYHLKFSWGHRIPMMKEHRDHSAHCQAVNEKMKCEGSEFWEKGFVAFQAAINAAIIEIATNHSVMEQLMSVTGVHMKILPFVAQGGVATDFFIFFCIISFSTFIYYVSVNVTQERQYITSLMTMMGLRESAFWLSWGLMYAGFILIMATLMALIVKSAQIVVLTGFVMVFTLFLLYGLSLITLAFLMSVLIKKPFLTGLVVFLLIVFWGILGFPALYTRLPAFLEWTLCLLSPFAFTVGMAQLIHLDYDVNSNAHLDSSQNPYLIIATLFMLVFDTLLYLVLTLYFDKILPAEYGHRCSPLFFLKSCFWFQHGRANHVVLENETDSDPTPNDCFEPVSPEFCGKEAIRIKNLKKEYAGKCERVEALKGVVFDIYEGQITALLGHSGAGKTTLLNILSGLSVPTSGSVTVYNHTLSRMADIENISKFTGFCPQSNVQFGFLTVKENLRLFAKIKGILPHEVEKEVQRVVQELEMENIQDILAQNLSGGQNRKLTFGIAILGDPQVLLLDEPTAGLDPLSRHRIWNLLKEGKSDRVILFSTQFIDEADILADRKVFISNGKLKCAGSSLFLKKKWGIGYHLSLHLNERCDPESITSLVKQHISDAKLTAQSEEKLVYILPLERTNKFPELYRDLDRCSNQGIEDYGVSITTLNEVFLKLEGKSTIDESDIGIWGQLQTDGAKDIGSLVELEQVLSSFHETRKTISGVALWRQQVCAIAKVRFLKLKKERKSLWTILLLFGISFIPQLLEHLFYESYQKSYPWELSPNTYFLSPGQQPQDPLTHLLVINKTGSTIDNFLHSLRRQNIAIEVDAFGTRNGTDDPSYNGAIIVSGDEKDHRFSIACNTKRLNCFPVLLDVISNGLLGIFNSSEHIQTDRSTFFEEHMDYEYGYRSNTFFWIPMAASFTPYIAMSSIGDYKKKAHSQLRISGLYPSAYWFGQALVDVSLYFLILLLMQIMDYIFSPEEIIFIIQNLLIQILCSIGYVSSLVFLTYVISFIFRNGRKNSGIWSFFFLIVVIFSIVATDLNEYGFLGLFFGTMLIPPFTLIGSLFIFSEISPDSMDYLGASESEIVYLALLIPYLHFLIFLFILRCLEMNCRKKLMRKDPVFRISPRSNAIFPNPEEPEGEEEDIQMERMRTVNAMAVRDFDETPVIIASCLRKEYAGKKKNCFSKRKKKIATRNVSFCVKKGEVIGLLGHNGAGKSTTIKMITGDTKPTAGQVILKGSGGGEPLGFLGYCPQENALWPNLTVRQHLEVYAAVKGLRKGDAMIAITRLVDALKLQDQLKAPVKTLSEGIKRKLCFVLSILGNPSVVLLDEPSTGMDPEGQQQMWQVIRATFRNTERGALLTTHYMAEAEAVCDRVAIMVSGRLRCIGSIQHLKSKFGKDYLLEMKLKNLAQMEPLHAEILRLFPQAAQQERFSSLMVYKLPVEDVRPLSQAFFKLEIVKQSFDLEEYSLSQSTLEQVFLELSKEQELGDLEEDFDPSVKWKLLLQEEP</sequence>
<organism>
    <name type="scientific">Homo sapiens</name>
    <name type="common">Human</name>
    <dbReference type="NCBI Taxonomy" id="9606"/>
    <lineage>
        <taxon>Eukaryota</taxon>
        <taxon>Metazoa</taxon>
        <taxon>Chordata</taxon>
        <taxon>Craniata</taxon>
        <taxon>Vertebrata</taxon>
        <taxon>Euteleostomi</taxon>
        <taxon>Mammalia</taxon>
        <taxon>Eutheria</taxon>
        <taxon>Euarchontoglires</taxon>
        <taxon>Primates</taxon>
        <taxon>Haplorrhini</taxon>
        <taxon>Catarrhini</taxon>
        <taxon>Hominidae</taxon>
        <taxon>Homo</taxon>
    </lineage>
</organism>
<reference key="1">
    <citation type="journal article" date="2001" name="GeneScreen">
        <title>Identifying and characterizing a five-gene cluster of ATP-binding cassette transporters mapping to human chromosome 17q24: a new subgroup within the ABCA subfamily.</title>
        <authorList>
            <person name="Arnould I."/>
            <person name="Schriml L.M."/>
            <person name="Prades C."/>
            <person name="Lachtermacher-Triunfol M."/>
            <person name="Schneider T."/>
            <person name="Maintoux C."/>
            <person name="Lemoine C."/>
            <person name="Debono D."/>
            <person name="Devaud C."/>
            <person name="Naudin L."/>
            <person name="Bauche S."/>
            <person name="Annat M."/>
            <person name="Annilo T."/>
            <person name="Allikmets R."/>
            <person name="Gold B."/>
            <person name="Denefle P."/>
            <person name="Rosier M."/>
            <person name="Dean M."/>
        </authorList>
    </citation>
    <scope>NUCLEOTIDE SEQUENCE [MRNA] (ISOFORM 1)</scope>
    <scope>VARIANTS HIS-353 AND THR-1306</scope>
    <scope>TISSUE SPECIFICITY</scope>
</reference>
<reference key="2">
    <citation type="journal article" date="2002" name="Biochem. Biophys. Res. Commun.">
        <title>Molecular structure of a novel cholesterol-responsive A subclass ABC transporter, ABCA9.</title>
        <authorList>
            <person name="Piehler A."/>
            <person name="Kaminski W.E."/>
            <person name="Wenzel J.J."/>
            <person name="Langmann T."/>
            <person name="Schmitz G."/>
        </authorList>
    </citation>
    <scope>NUCLEOTIDE SEQUENCE [GENOMIC DNA / MRNA] (ISOFORM 1)</scope>
    <scope>ALTERNATIVE SPLICING (ISOFORMS 2; 3 AND 4)</scope>
    <scope>FUNCTION</scope>
    <scope>INDUCTION</scope>
    <scope>DEVELOPMENTAL STAGE</scope>
    <source>
        <tissue>Macrophage</tissue>
    </source>
</reference>
<reference key="3">
    <citation type="journal article" date="2004" name="Genome Res.">
        <title>The status, quality, and expansion of the NIH full-length cDNA project: the Mammalian Gene Collection (MGC).</title>
        <authorList>
            <consortium name="The MGC Project Team"/>
        </authorList>
    </citation>
    <scope>NUCLEOTIDE SEQUENCE [LARGE SCALE MRNA] (ISOFORM 5)</scope>
</reference>
<reference key="4">
    <citation type="journal article" date="2004" name="Nat. Genet.">
        <title>Complete sequencing and characterization of 21,243 full-length human cDNAs.</title>
        <authorList>
            <person name="Ota T."/>
            <person name="Suzuki Y."/>
            <person name="Nishikawa T."/>
            <person name="Otsuki T."/>
            <person name="Sugiyama T."/>
            <person name="Irie R."/>
            <person name="Wakamatsu A."/>
            <person name="Hayashi K."/>
            <person name="Sato H."/>
            <person name="Nagai K."/>
            <person name="Kimura K."/>
            <person name="Makita H."/>
            <person name="Sekine M."/>
            <person name="Obayashi M."/>
            <person name="Nishi T."/>
            <person name="Shibahara T."/>
            <person name="Tanaka T."/>
            <person name="Ishii S."/>
            <person name="Yamamoto J."/>
            <person name="Saito K."/>
            <person name="Kawai Y."/>
            <person name="Isono Y."/>
            <person name="Nakamura Y."/>
            <person name="Nagahari K."/>
            <person name="Murakami K."/>
            <person name="Yasuda T."/>
            <person name="Iwayanagi T."/>
            <person name="Wagatsuma M."/>
            <person name="Shiratori A."/>
            <person name="Sudo H."/>
            <person name="Hosoiri T."/>
            <person name="Kaku Y."/>
            <person name="Kodaira H."/>
            <person name="Kondo H."/>
            <person name="Sugawara M."/>
            <person name="Takahashi M."/>
            <person name="Kanda K."/>
            <person name="Yokoi T."/>
            <person name="Furuya T."/>
            <person name="Kikkawa E."/>
            <person name="Omura Y."/>
            <person name="Abe K."/>
            <person name="Kamihara K."/>
            <person name="Katsuta N."/>
            <person name="Sato K."/>
            <person name="Tanikawa M."/>
            <person name="Yamazaki M."/>
            <person name="Ninomiya K."/>
            <person name="Ishibashi T."/>
            <person name="Yamashita H."/>
            <person name="Murakawa K."/>
            <person name="Fujimori K."/>
            <person name="Tanai H."/>
            <person name="Kimata M."/>
            <person name="Watanabe M."/>
            <person name="Hiraoka S."/>
            <person name="Chiba Y."/>
            <person name="Ishida S."/>
            <person name="Ono Y."/>
            <person name="Takiguchi S."/>
            <person name="Watanabe S."/>
            <person name="Yosida M."/>
            <person name="Hotuta T."/>
            <person name="Kusano J."/>
            <person name="Kanehori K."/>
            <person name="Takahashi-Fujii A."/>
            <person name="Hara H."/>
            <person name="Tanase T.-O."/>
            <person name="Nomura Y."/>
            <person name="Togiya S."/>
            <person name="Komai F."/>
            <person name="Hara R."/>
            <person name="Takeuchi K."/>
            <person name="Arita M."/>
            <person name="Imose N."/>
            <person name="Musashino K."/>
            <person name="Yuuki H."/>
            <person name="Oshima A."/>
            <person name="Sasaki N."/>
            <person name="Aotsuka S."/>
            <person name="Yoshikawa Y."/>
            <person name="Matsunawa H."/>
            <person name="Ichihara T."/>
            <person name="Shiohata N."/>
            <person name="Sano S."/>
            <person name="Moriya S."/>
            <person name="Momiyama H."/>
            <person name="Satoh N."/>
            <person name="Takami S."/>
            <person name="Terashima Y."/>
            <person name="Suzuki O."/>
            <person name="Nakagawa S."/>
            <person name="Senoh A."/>
            <person name="Mizoguchi H."/>
            <person name="Goto Y."/>
            <person name="Shimizu F."/>
            <person name="Wakebe H."/>
            <person name="Hishigaki H."/>
            <person name="Watanabe T."/>
            <person name="Sugiyama A."/>
            <person name="Takemoto M."/>
            <person name="Kawakami B."/>
            <person name="Yamazaki M."/>
            <person name="Watanabe K."/>
            <person name="Kumagai A."/>
            <person name="Itakura S."/>
            <person name="Fukuzumi Y."/>
            <person name="Fujimori Y."/>
            <person name="Komiyama M."/>
            <person name="Tashiro H."/>
            <person name="Tanigami A."/>
            <person name="Fujiwara T."/>
            <person name="Ono T."/>
            <person name="Yamada K."/>
            <person name="Fujii Y."/>
            <person name="Ozaki K."/>
            <person name="Hirao M."/>
            <person name="Ohmori Y."/>
            <person name="Kawabata A."/>
            <person name="Hikiji T."/>
            <person name="Kobatake N."/>
            <person name="Inagaki H."/>
            <person name="Ikema Y."/>
            <person name="Okamoto S."/>
            <person name="Okitani R."/>
            <person name="Kawakami T."/>
            <person name="Noguchi S."/>
            <person name="Itoh T."/>
            <person name="Shigeta K."/>
            <person name="Senba T."/>
            <person name="Matsumura K."/>
            <person name="Nakajima Y."/>
            <person name="Mizuno T."/>
            <person name="Morinaga M."/>
            <person name="Sasaki M."/>
            <person name="Togashi T."/>
            <person name="Oyama M."/>
            <person name="Hata H."/>
            <person name="Watanabe M."/>
            <person name="Komatsu T."/>
            <person name="Mizushima-Sugano J."/>
            <person name="Satoh T."/>
            <person name="Shirai Y."/>
            <person name="Takahashi Y."/>
            <person name="Nakagawa K."/>
            <person name="Okumura K."/>
            <person name="Nagase T."/>
            <person name="Nomura N."/>
            <person name="Kikuchi H."/>
            <person name="Masuho Y."/>
            <person name="Yamashita R."/>
            <person name="Nakai K."/>
            <person name="Yada T."/>
            <person name="Nakamura Y."/>
            <person name="Ohara O."/>
            <person name="Isogai T."/>
            <person name="Sugano S."/>
        </authorList>
    </citation>
    <scope>NUCLEOTIDE SEQUENCE [LARGE SCALE MRNA] OF 1-856 (ISOFORM 1)</scope>
    <scope>VARIANT HIS-353</scope>
    <source>
        <tissue>Embryo</tissue>
        <tissue>Small intestine</tissue>
    </source>
</reference>
<reference key="5">
    <citation type="journal article" date="2009" name="J. Proteome Res.">
        <title>Glycoproteomics analysis of human liver tissue by combination of multiple enzyme digestion and hydrazide chemistry.</title>
        <authorList>
            <person name="Chen R."/>
            <person name="Jiang X."/>
            <person name="Sun D."/>
            <person name="Han G."/>
            <person name="Wang F."/>
            <person name="Ye M."/>
            <person name="Wang L."/>
            <person name="Zou H."/>
        </authorList>
    </citation>
    <scope>GLYCOSYLATION [LARGE SCALE ANALYSIS] AT ASN-949</scope>
    <source>
        <tissue>Liver</tissue>
    </source>
</reference>
<keyword id="KW-0025">Alternative splicing</keyword>
<keyword id="KW-0067">ATP-binding</keyword>
<keyword id="KW-0325">Glycoprotein</keyword>
<keyword id="KW-0472">Membrane</keyword>
<keyword id="KW-0547">Nucleotide-binding</keyword>
<keyword id="KW-1267">Proteomics identification</keyword>
<keyword id="KW-1185">Reference proteome</keyword>
<keyword id="KW-0677">Repeat</keyword>
<keyword id="KW-1278">Translocase</keyword>
<keyword id="KW-0812">Transmembrane</keyword>
<keyword id="KW-1133">Transmembrane helix</keyword>
<keyword id="KW-0813">Transport</keyword>
<name>ABCA9_HUMAN</name>
<accession>Q8IUA7</accession>
<accession>Q6P655</accession>
<accession>Q8N2S4</accession>
<accession>Q8WWZ5</accession>
<accession>Q96MD8</accession>
<protein>
    <recommendedName>
        <fullName evidence="8">ATP-binding cassette sub-family A member 9</fullName>
        <ecNumber evidence="9">7.6.2.-</ecNumber>
    </recommendedName>
</protein>